<feature type="chain" id="PRO_1000007741" description="5'-nucleotidase SurE">
    <location>
        <begin position="1"/>
        <end position="245"/>
    </location>
</feature>
<feature type="binding site" evidence="1">
    <location>
        <position position="8"/>
    </location>
    <ligand>
        <name>a divalent metal cation</name>
        <dbReference type="ChEBI" id="CHEBI:60240"/>
    </ligand>
</feature>
<feature type="binding site" evidence="1">
    <location>
        <position position="9"/>
    </location>
    <ligand>
        <name>a divalent metal cation</name>
        <dbReference type="ChEBI" id="CHEBI:60240"/>
    </ligand>
</feature>
<feature type="binding site" evidence="1">
    <location>
        <position position="39"/>
    </location>
    <ligand>
        <name>a divalent metal cation</name>
        <dbReference type="ChEBI" id="CHEBI:60240"/>
    </ligand>
</feature>
<feature type="binding site" evidence="1">
    <location>
        <position position="91"/>
    </location>
    <ligand>
        <name>a divalent metal cation</name>
        <dbReference type="ChEBI" id="CHEBI:60240"/>
    </ligand>
</feature>
<proteinExistence type="inferred from homology"/>
<organism>
    <name type="scientific">Janthinobacterium sp. (strain Marseille)</name>
    <name type="common">Minibacterium massiliensis</name>
    <dbReference type="NCBI Taxonomy" id="375286"/>
    <lineage>
        <taxon>Bacteria</taxon>
        <taxon>Pseudomonadati</taxon>
        <taxon>Pseudomonadota</taxon>
        <taxon>Betaproteobacteria</taxon>
        <taxon>Burkholderiales</taxon>
        <taxon>Oxalobacteraceae</taxon>
        <taxon>Janthinobacterium</taxon>
    </lineage>
</organism>
<reference key="1">
    <citation type="journal article" date="2007" name="PLoS Genet.">
        <title>Genome analysis of Minibacterium massiliensis highlights the convergent evolution of water-living bacteria.</title>
        <authorList>
            <person name="Audic S."/>
            <person name="Robert C."/>
            <person name="Campagna B."/>
            <person name="Parinello H."/>
            <person name="Claverie J.-M."/>
            <person name="Raoult D."/>
            <person name="Drancourt M."/>
        </authorList>
    </citation>
    <scope>NUCLEOTIDE SEQUENCE [LARGE SCALE GENOMIC DNA]</scope>
    <source>
        <strain>Marseille</strain>
    </source>
</reference>
<keyword id="KW-0963">Cytoplasm</keyword>
<keyword id="KW-0378">Hydrolase</keyword>
<keyword id="KW-0479">Metal-binding</keyword>
<keyword id="KW-0547">Nucleotide-binding</keyword>
<name>SURE_JANMA</name>
<sequence>MKILISNDDGYLAPGLIALADAMAAIADIVVVAPDSNRSGSSNSLTLDRPLSVYQAANGFYFINGTPSDCVHIALTGIMSEPPDLIVSGINQGQNMGDDTLYSGTVAAATEGFLFGIPAIAFSQVNKGWGQIDAAARVARDIVERRFDTYGKPFLLNVNIPNLPYEQMKSPVATRLGKRHQSEAVIKAQDPHGRDIYWIGPCGGQKDAGEGTDFHATALGHVSITPLQIDLTHTAQLEALKKVLV</sequence>
<protein>
    <recommendedName>
        <fullName evidence="1">5'-nucleotidase SurE</fullName>
        <ecNumber evidence="1">3.1.3.5</ecNumber>
    </recommendedName>
    <alternativeName>
        <fullName evidence="1">Nucleoside 5'-monophosphate phosphohydrolase</fullName>
    </alternativeName>
</protein>
<gene>
    <name evidence="1" type="primary">surE</name>
    <name type="ordered locus">mma_2137</name>
</gene>
<comment type="function">
    <text evidence="1">Nucleotidase that shows phosphatase activity on nucleoside 5'-monophosphates.</text>
</comment>
<comment type="catalytic activity">
    <reaction evidence="1">
        <text>a ribonucleoside 5'-phosphate + H2O = a ribonucleoside + phosphate</text>
        <dbReference type="Rhea" id="RHEA:12484"/>
        <dbReference type="ChEBI" id="CHEBI:15377"/>
        <dbReference type="ChEBI" id="CHEBI:18254"/>
        <dbReference type="ChEBI" id="CHEBI:43474"/>
        <dbReference type="ChEBI" id="CHEBI:58043"/>
        <dbReference type="EC" id="3.1.3.5"/>
    </reaction>
</comment>
<comment type="cofactor">
    <cofactor evidence="1">
        <name>a divalent metal cation</name>
        <dbReference type="ChEBI" id="CHEBI:60240"/>
    </cofactor>
    <text evidence="1">Binds 1 divalent metal cation per subunit.</text>
</comment>
<comment type="subcellular location">
    <subcellularLocation>
        <location evidence="1">Cytoplasm</location>
    </subcellularLocation>
</comment>
<comment type="similarity">
    <text evidence="1">Belongs to the SurE nucleotidase family.</text>
</comment>
<accession>A6SZY0</accession>
<evidence type="ECO:0000255" key="1">
    <source>
        <dbReference type="HAMAP-Rule" id="MF_00060"/>
    </source>
</evidence>
<dbReference type="EC" id="3.1.3.5" evidence="1"/>
<dbReference type="EMBL" id="CP000269">
    <property type="protein sequence ID" value="ABR88477.1"/>
    <property type="molecule type" value="Genomic_DNA"/>
</dbReference>
<dbReference type="RefSeq" id="WP_012079990.1">
    <property type="nucleotide sequence ID" value="NC_009659.1"/>
</dbReference>
<dbReference type="SMR" id="A6SZY0"/>
<dbReference type="STRING" id="375286.mma_2137"/>
<dbReference type="KEGG" id="mms:mma_2137"/>
<dbReference type="eggNOG" id="COG0496">
    <property type="taxonomic scope" value="Bacteria"/>
</dbReference>
<dbReference type="HOGENOM" id="CLU_045192_1_2_4"/>
<dbReference type="OrthoDB" id="9780815at2"/>
<dbReference type="Proteomes" id="UP000006388">
    <property type="component" value="Chromosome"/>
</dbReference>
<dbReference type="GO" id="GO:0005737">
    <property type="term" value="C:cytoplasm"/>
    <property type="evidence" value="ECO:0007669"/>
    <property type="project" value="UniProtKB-SubCell"/>
</dbReference>
<dbReference type="GO" id="GO:0008254">
    <property type="term" value="F:3'-nucleotidase activity"/>
    <property type="evidence" value="ECO:0007669"/>
    <property type="project" value="TreeGrafter"/>
</dbReference>
<dbReference type="GO" id="GO:0008253">
    <property type="term" value="F:5'-nucleotidase activity"/>
    <property type="evidence" value="ECO:0007669"/>
    <property type="project" value="UniProtKB-UniRule"/>
</dbReference>
<dbReference type="GO" id="GO:0004309">
    <property type="term" value="F:exopolyphosphatase activity"/>
    <property type="evidence" value="ECO:0007669"/>
    <property type="project" value="TreeGrafter"/>
</dbReference>
<dbReference type="GO" id="GO:0046872">
    <property type="term" value="F:metal ion binding"/>
    <property type="evidence" value="ECO:0007669"/>
    <property type="project" value="UniProtKB-UniRule"/>
</dbReference>
<dbReference type="GO" id="GO:0000166">
    <property type="term" value="F:nucleotide binding"/>
    <property type="evidence" value="ECO:0007669"/>
    <property type="project" value="UniProtKB-KW"/>
</dbReference>
<dbReference type="FunFam" id="3.40.1210.10:FF:000001">
    <property type="entry name" value="5'/3'-nucleotidase SurE"/>
    <property type="match status" value="1"/>
</dbReference>
<dbReference type="Gene3D" id="3.40.1210.10">
    <property type="entry name" value="Survival protein SurE-like phosphatase/nucleotidase"/>
    <property type="match status" value="1"/>
</dbReference>
<dbReference type="HAMAP" id="MF_00060">
    <property type="entry name" value="SurE"/>
    <property type="match status" value="1"/>
</dbReference>
<dbReference type="InterPro" id="IPR030048">
    <property type="entry name" value="SurE"/>
</dbReference>
<dbReference type="InterPro" id="IPR002828">
    <property type="entry name" value="SurE-like_Pase/nucleotidase"/>
</dbReference>
<dbReference type="InterPro" id="IPR036523">
    <property type="entry name" value="SurE-like_sf"/>
</dbReference>
<dbReference type="NCBIfam" id="NF001489">
    <property type="entry name" value="PRK00346.1-3"/>
    <property type="match status" value="1"/>
</dbReference>
<dbReference type="NCBIfam" id="NF001490">
    <property type="entry name" value="PRK00346.1-4"/>
    <property type="match status" value="1"/>
</dbReference>
<dbReference type="NCBIfam" id="TIGR00087">
    <property type="entry name" value="surE"/>
    <property type="match status" value="1"/>
</dbReference>
<dbReference type="PANTHER" id="PTHR30457">
    <property type="entry name" value="5'-NUCLEOTIDASE SURE"/>
    <property type="match status" value="1"/>
</dbReference>
<dbReference type="PANTHER" id="PTHR30457:SF12">
    <property type="entry name" value="5'_3'-NUCLEOTIDASE SURE"/>
    <property type="match status" value="1"/>
</dbReference>
<dbReference type="Pfam" id="PF01975">
    <property type="entry name" value="SurE"/>
    <property type="match status" value="1"/>
</dbReference>
<dbReference type="SUPFAM" id="SSF64167">
    <property type="entry name" value="SurE-like"/>
    <property type="match status" value="1"/>
</dbReference>